<dbReference type="EMBL" id="CP001298">
    <property type="protein sequence ID" value="ACK83889.1"/>
    <property type="molecule type" value="Genomic_DNA"/>
</dbReference>
<dbReference type="RefSeq" id="WP_003600267.1">
    <property type="nucleotide sequence ID" value="NC_011757.1"/>
</dbReference>
<dbReference type="SMR" id="B7KRF3"/>
<dbReference type="GeneID" id="72990472"/>
<dbReference type="KEGG" id="mch:Mchl_3051"/>
<dbReference type="HOGENOM" id="CLU_113688_0_0_5"/>
<dbReference type="Proteomes" id="UP000002385">
    <property type="component" value="Chromosome"/>
</dbReference>
<dbReference type="GO" id="GO:0005829">
    <property type="term" value="C:cytosol"/>
    <property type="evidence" value="ECO:0007669"/>
    <property type="project" value="TreeGrafter"/>
</dbReference>
<dbReference type="GO" id="GO:0003723">
    <property type="term" value="F:RNA binding"/>
    <property type="evidence" value="ECO:0007669"/>
    <property type="project" value="UniProtKB-UniRule"/>
</dbReference>
<dbReference type="GO" id="GO:0006355">
    <property type="term" value="P:regulation of DNA-templated transcription"/>
    <property type="evidence" value="ECO:0007669"/>
    <property type="project" value="InterPro"/>
</dbReference>
<dbReference type="GO" id="GO:0043487">
    <property type="term" value="P:regulation of RNA stability"/>
    <property type="evidence" value="ECO:0007669"/>
    <property type="project" value="TreeGrafter"/>
</dbReference>
<dbReference type="GO" id="GO:0045974">
    <property type="term" value="P:regulation of translation, ncRNA-mediated"/>
    <property type="evidence" value="ECO:0007669"/>
    <property type="project" value="TreeGrafter"/>
</dbReference>
<dbReference type="CDD" id="cd01716">
    <property type="entry name" value="Hfq"/>
    <property type="match status" value="1"/>
</dbReference>
<dbReference type="FunFam" id="2.30.30.100:FF:000001">
    <property type="entry name" value="RNA-binding protein Hfq"/>
    <property type="match status" value="1"/>
</dbReference>
<dbReference type="Gene3D" id="2.30.30.100">
    <property type="match status" value="1"/>
</dbReference>
<dbReference type="HAMAP" id="MF_00436">
    <property type="entry name" value="Hfq"/>
    <property type="match status" value="1"/>
</dbReference>
<dbReference type="InterPro" id="IPR005001">
    <property type="entry name" value="Hfq"/>
</dbReference>
<dbReference type="InterPro" id="IPR010920">
    <property type="entry name" value="LSM_dom_sf"/>
</dbReference>
<dbReference type="InterPro" id="IPR047575">
    <property type="entry name" value="Sm"/>
</dbReference>
<dbReference type="NCBIfam" id="TIGR02383">
    <property type="entry name" value="Hfq"/>
    <property type="match status" value="1"/>
</dbReference>
<dbReference type="NCBIfam" id="NF001602">
    <property type="entry name" value="PRK00395.1"/>
    <property type="match status" value="1"/>
</dbReference>
<dbReference type="PANTHER" id="PTHR34772">
    <property type="entry name" value="RNA-BINDING PROTEIN HFQ"/>
    <property type="match status" value="1"/>
</dbReference>
<dbReference type="PANTHER" id="PTHR34772:SF1">
    <property type="entry name" value="RNA-BINDING PROTEIN HFQ"/>
    <property type="match status" value="1"/>
</dbReference>
<dbReference type="Pfam" id="PF17209">
    <property type="entry name" value="Hfq"/>
    <property type="match status" value="1"/>
</dbReference>
<dbReference type="SUPFAM" id="SSF50182">
    <property type="entry name" value="Sm-like ribonucleoproteins"/>
    <property type="match status" value="1"/>
</dbReference>
<dbReference type="PROSITE" id="PS52002">
    <property type="entry name" value="SM"/>
    <property type="match status" value="1"/>
</dbReference>
<organism>
    <name type="scientific">Methylorubrum extorquens (strain CM4 / NCIMB 13688)</name>
    <name type="common">Methylobacterium extorquens</name>
    <dbReference type="NCBI Taxonomy" id="440085"/>
    <lineage>
        <taxon>Bacteria</taxon>
        <taxon>Pseudomonadati</taxon>
        <taxon>Pseudomonadota</taxon>
        <taxon>Alphaproteobacteria</taxon>
        <taxon>Hyphomicrobiales</taxon>
        <taxon>Methylobacteriaceae</taxon>
        <taxon>Methylorubrum</taxon>
    </lineage>
</organism>
<name>HFQ_METC4</name>
<gene>
    <name evidence="1" type="primary">hfq</name>
    <name type="ordered locus">Mchl_3051</name>
</gene>
<keyword id="KW-0694">RNA-binding</keyword>
<keyword id="KW-0346">Stress response</keyword>
<reference key="1">
    <citation type="submission" date="2008-12" db="EMBL/GenBank/DDBJ databases">
        <title>Complete sequence of chromosome of Methylobacterium chloromethanicum CM4.</title>
        <authorList>
            <consortium name="US DOE Joint Genome Institute"/>
            <person name="Lucas S."/>
            <person name="Copeland A."/>
            <person name="Lapidus A."/>
            <person name="Glavina del Rio T."/>
            <person name="Dalin E."/>
            <person name="Tice H."/>
            <person name="Bruce D."/>
            <person name="Goodwin L."/>
            <person name="Pitluck S."/>
            <person name="Chertkov O."/>
            <person name="Brettin T."/>
            <person name="Detter J.C."/>
            <person name="Han C."/>
            <person name="Larimer F."/>
            <person name="Land M."/>
            <person name="Hauser L."/>
            <person name="Kyrpides N."/>
            <person name="Mikhailova N."/>
            <person name="Marx C."/>
            <person name="Richardson P."/>
        </authorList>
    </citation>
    <scope>NUCLEOTIDE SEQUENCE [LARGE SCALE GENOMIC DNA]</scope>
    <source>
        <strain>CM4 / NCIMB 13688</strain>
    </source>
</reference>
<evidence type="ECO:0000255" key="1">
    <source>
        <dbReference type="HAMAP-Rule" id="MF_00436"/>
    </source>
</evidence>
<evidence type="ECO:0000255" key="2">
    <source>
        <dbReference type="PROSITE-ProRule" id="PRU01346"/>
    </source>
</evidence>
<sequence>MAGERAQNLQDTFLNHVRKNKIPLTIFLVNGVKLQGVVTWFDNFCVLLRRDGHSQLVYKHAISTIMPGHPVQLFEPDETAPEKA</sequence>
<protein>
    <recommendedName>
        <fullName evidence="1">RNA-binding protein Hfq</fullName>
    </recommendedName>
</protein>
<accession>B7KRF3</accession>
<comment type="function">
    <text evidence="1">RNA chaperone that binds small regulatory RNA (sRNAs) and mRNAs to facilitate mRNA translational regulation in response to envelope stress, environmental stress and changes in metabolite concentrations. Also binds with high specificity to tRNAs.</text>
</comment>
<comment type="subunit">
    <text evidence="1">Homohexamer.</text>
</comment>
<comment type="similarity">
    <text evidence="1">Belongs to the Hfq family.</text>
</comment>
<proteinExistence type="inferred from homology"/>
<feature type="chain" id="PRO_1000135036" description="RNA-binding protein Hfq">
    <location>
        <begin position="1"/>
        <end position="84"/>
    </location>
</feature>
<feature type="domain" description="Sm" evidence="2">
    <location>
        <begin position="11"/>
        <end position="71"/>
    </location>
</feature>